<protein>
    <recommendedName>
        <fullName evidence="1">Hydroxyethylthiazole kinase</fullName>
        <ecNumber evidence="1">2.7.1.50</ecNumber>
    </recommendedName>
    <alternativeName>
        <fullName evidence="1">4-methyl-5-beta-hydroxyethylthiazole kinase</fullName>
        <shortName evidence="1">TH kinase</shortName>
        <shortName evidence="1">Thz kinase</shortName>
    </alternativeName>
</protein>
<reference key="1">
    <citation type="submission" date="2009-06" db="EMBL/GenBank/DDBJ databases">
        <title>Complete sequence of chromosome of Geopacillus sp. WCH70.</title>
        <authorList>
            <consortium name="US DOE Joint Genome Institute"/>
            <person name="Lucas S."/>
            <person name="Copeland A."/>
            <person name="Lapidus A."/>
            <person name="Glavina del Rio T."/>
            <person name="Dalin E."/>
            <person name="Tice H."/>
            <person name="Bruce D."/>
            <person name="Goodwin L."/>
            <person name="Pitluck S."/>
            <person name="Chertkov O."/>
            <person name="Brettin T."/>
            <person name="Detter J.C."/>
            <person name="Han C."/>
            <person name="Larimer F."/>
            <person name="Land M."/>
            <person name="Hauser L."/>
            <person name="Kyrpides N."/>
            <person name="Mikhailova N."/>
            <person name="Brumm P."/>
            <person name="Mead D.A."/>
            <person name="Richardson P."/>
        </authorList>
    </citation>
    <scope>NUCLEOTIDE SEQUENCE [LARGE SCALE GENOMIC DNA]</scope>
    <source>
        <strain>WCH70</strain>
    </source>
</reference>
<name>THIM_GEOSW</name>
<organism>
    <name type="scientific">Geobacillus sp. (strain WCH70)</name>
    <dbReference type="NCBI Taxonomy" id="471223"/>
    <lineage>
        <taxon>Bacteria</taxon>
        <taxon>Bacillati</taxon>
        <taxon>Bacillota</taxon>
        <taxon>Bacilli</taxon>
        <taxon>Bacillales</taxon>
        <taxon>Anoxybacillaceae</taxon>
        <taxon>Geobacillus</taxon>
    </lineage>
</organism>
<proteinExistence type="inferred from homology"/>
<gene>
    <name evidence="1" type="primary">thiM</name>
    <name type="ordered locus">GWCH70_1939</name>
</gene>
<sequence length="269" mass="27597">MNNQEAINALQMVRQANPLVHNITNVVVTNFTANGLLALGASPVMAYAKEEVADMAKIAGALVLNIGTLNPTEVEAMIIAGKAANEAGVPVIFDPVGAGATPYRTETARNIASAVQLSVIRGNAAEIANTIGESWTIKGVDAGEGSGDVVSLAKKAAKQLKTVVAITGKEDVVTDGNTTYIIRNGHPLLTKVTGTGCLLTSVIGAFAAVERDVLKAAAAALVIYGVAAEIAAKNAGDEGPGSFQIAFLDALSRVGADEISRYGRIEQGE</sequence>
<keyword id="KW-0067">ATP-binding</keyword>
<keyword id="KW-0418">Kinase</keyword>
<keyword id="KW-0460">Magnesium</keyword>
<keyword id="KW-0479">Metal-binding</keyword>
<keyword id="KW-0547">Nucleotide-binding</keyword>
<keyword id="KW-0784">Thiamine biosynthesis</keyword>
<keyword id="KW-0808">Transferase</keyword>
<accession>C5D2N0</accession>
<feature type="chain" id="PRO_1000204360" description="Hydroxyethylthiazole kinase">
    <location>
        <begin position="1"/>
        <end position="269"/>
    </location>
</feature>
<feature type="binding site" evidence="1">
    <location>
        <position position="45"/>
    </location>
    <ligand>
        <name>substrate</name>
    </ligand>
</feature>
<feature type="binding site" evidence="1">
    <location>
        <position position="121"/>
    </location>
    <ligand>
        <name>ATP</name>
        <dbReference type="ChEBI" id="CHEBI:30616"/>
    </ligand>
</feature>
<feature type="binding site" evidence="1">
    <location>
        <position position="167"/>
    </location>
    <ligand>
        <name>ATP</name>
        <dbReference type="ChEBI" id="CHEBI:30616"/>
    </ligand>
</feature>
<feature type="binding site" evidence="1">
    <location>
        <position position="194"/>
    </location>
    <ligand>
        <name>substrate</name>
    </ligand>
</feature>
<evidence type="ECO:0000255" key="1">
    <source>
        <dbReference type="HAMAP-Rule" id="MF_00228"/>
    </source>
</evidence>
<dbReference type="EC" id="2.7.1.50" evidence="1"/>
<dbReference type="EMBL" id="CP001638">
    <property type="protein sequence ID" value="ACS24672.1"/>
    <property type="molecule type" value="Genomic_DNA"/>
</dbReference>
<dbReference type="SMR" id="C5D2N0"/>
<dbReference type="STRING" id="471223.GWCH70_1939"/>
<dbReference type="KEGG" id="gwc:GWCH70_1939"/>
<dbReference type="eggNOG" id="COG2145">
    <property type="taxonomic scope" value="Bacteria"/>
</dbReference>
<dbReference type="HOGENOM" id="CLU_019943_0_1_9"/>
<dbReference type="OrthoDB" id="9778146at2"/>
<dbReference type="UniPathway" id="UPA00060">
    <property type="reaction ID" value="UER00139"/>
</dbReference>
<dbReference type="GO" id="GO:0005524">
    <property type="term" value="F:ATP binding"/>
    <property type="evidence" value="ECO:0007669"/>
    <property type="project" value="UniProtKB-UniRule"/>
</dbReference>
<dbReference type="GO" id="GO:0004417">
    <property type="term" value="F:hydroxyethylthiazole kinase activity"/>
    <property type="evidence" value="ECO:0007669"/>
    <property type="project" value="UniProtKB-UniRule"/>
</dbReference>
<dbReference type="GO" id="GO:0000287">
    <property type="term" value="F:magnesium ion binding"/>
    <property type="evidence" value="ECO:0007669"/>
    <property type="project" value="UniProtKB-UniRule"/>
</dbReference>
<dbReference type="GO" id="GO:0009228">
    <property type="term" value="P:thiamine biosynthetic process"/>
    <property type="evidence" value="ECO:0007669"/>
    <property type="project" value="UniProtKB-KW"/>
</dbReference>
<dbReference type="GO" id="GO:0009229">
    <property type="term" value="P:thiamine diphosphate biosynthetic process"/>
    <property type="evidence" value="ECO:0007669"/>
    <property type="project" value="UniProtKB-UniRule"/>
</dbReference>
<dbReference type="CDD" id="cd01170">
    <property type="entry name" value="THZ_kinase"/>
    <property type="match status" value="1"/>
</dbReference>
<dbReference type="Gene3D" id="3.40.1190.20">
    <property type="match status" value="1"/>
</dbReference>
<dbReference type="HAMAP" id="MF_00228">
    <property type="entry name" value="Thz_kinase"/>
    <property type="match status" value="1"/>
</dbReference>
<dbReference type="InterPro" id="IPR000417">
    <property type="entry name" value="Hyethyz_kinase"/>
</dbReference>
<dbReference type="InterPro" id="IPR029056">
    <property type="entry name" value="Ribokinase-like"/>
</dbReference>
<dbReference type="NCBIfam" id="NF006830">
    <property type="entry name" value="PRK09355.1"/>
    <property type="match status" value="1"/>
</dbReference>
<dbReference type="NCBIfam" id="TIGR00694">
    <property type="entry name" value="thiM"/>
    <property type="match status" value="1"/>
</dbReference>
<dbReference type="Pfam" id="PF02110">
    <property type="entry name" value="HK"/>
    <property type="match status" value="1"/>
</dbReference>
<dbReference type="PIRSF" id="PIRSF000513">
    <property type="entry name" value="Thz_kinase"/>
    <property type="match status" value="1"/>
</dbReference>
<dbReference type="PRINTS" id="PR01099">
    <property type="entry name" value="HYETHTZKNASE"/>
</dbReference>
<dbReference type="SUPFAM" id="SSF53613">
    <property type="entry name" value="Ribokinase-like"/>
    <property type="match status" value="1"/>
</dbReference>
<comment type="function">
    <text evidence="1">Catalyzes the phosphorylation of the hydroxyl group of 4-methyl-5-beta-hydroxyethylthiazole (THZ).</text>
</comment>
<comment type="catalytic activity">
    <reaction evidence="1">
        <text>5-(2-hydroxyethyl)-4-methylthiazole + ATP = 4-methyl-5-(2-phosphooxyethyl)-thiazole + ADP + H(+)</text>
        <dbReference type="Rhea" id="RHEA:24212"/>
        <dbReference type="ChEBI" id="CHEBI:15378"/>
        <dbReference type="ChEBI" id="CHEBI:17957"/>
        <dbReference type="ChEBI" id="CHEBI:30616"/>
        <dbReference type="ChEBI" id="CHEBI:58296"/>
        <dbReference type="ChEBI" id="CHEBI:456216"/>
        <dbReference type="EC" id="2.7.1.50"/>
    </reaction>
</comment>
<comment type="cofactor">
    <cofactor evidence="1">
        <name>Mg(2+)</name>
        <dbReference type="ChEBI" id="CHEBI:18420"/>
    </cofactor>
</comment>
<comment type="pathway">
    <text evidence="1">Cofactor biosynthesis; thiamine diphosphate biosynthesis; 4-methyl-5-(2-phosphoethyl)-thiazole from 5-(2-hydroxyethyl)-4-methylthiazole: step 1/1.</text>
</comment>
<comment type="similarity">
    <text evidence="1">Belongs to the Thz kinase family.</text>
</comment>